<evidence type="ECO:0000250" key="1"/>
<evidence type="ECO:0000250" key="2">
    <source>
        <dbReference type="UniProtKB" id="P00157"/>
    </source>
</evidence>
<evidence type="ECO:0000255" key="3">
    <source>
        <dbReference type="PROSITE-ProRule" id="PRU00967"/>
    </source>
</evidence>
<evidence type="ECO:0000255" key="4">
    <source>
        <dbReference type="PROSITE-ProRule" id="PRU00968"/>
    </source>
</evidence>
<sequence length="379" mass="42459">MTNIRKTHPLAKIINNSFIDLPTPSNISAWWNFGSLLGVCLILQILTGLFLAMHYTPDTTTAFSSVTHICRDVHYGWVIRYVHANGASIFFICLFMHVGRGLYYGSYLFPETWNIGIILLFTIMATAFMGYVLPWGQMSFWGATVITNLLSAIPYIGTDLVEWIWGGFSVDKATLTRFFAFHFILPFIILALAAVHLLFLHETGSNNPSGIPSDSDKIPFHPYYTIKDILGALLLALTLATLVLFSPDLLGDPDNYTPANPLSTPPHIKPEWYFLFAYAILRSIPNKLGGVLALIFSILILAIIPLLHTSKQRGMMFRPLSQCLFWLLVADLLTLTWIGGQPVEHPFIIIGQLASILYFTILLVLMPIAGIIENNLLKW</sequence>
<comment type="function">
    <text evidence="2">Component of the ubiquinol-cytochrome c reductase complex (complex III or cytochrome b-c1 complex) that is part of the mitochondrial respiratory chain. The b-c1 complex mediates electron transfer from ubiquinol to cytochrome c. Contributes to the generation of a proton gradient across the mitochondrial membrane that is then used for ATP synthesis.</text>
</comment>
<comment type="cofactor">
    <cofactor evidence="2">
        <name>heme b</name>
        <dbReference type="ChEBI" id="CHEBI:60344"/>
    </cofactor>
    <text evidence="2">Binds 2 heme b groups non-covalently.</text>
</comment>
<comment type="subunit">
    <text evidence="2">The cytochrome bc1 complex contains 11 subunits: 3 respiratory subunits (MT-CYB, CYC1 and UQCRFS1), 2 core proteins (UQCRC1 and UQCRC2) and 6 low-molecular weight proteins (UQCRH/QCR6, UQCRB/QCR7, UQCRQ/QCR8, UQCR10/QCR9, UQCR11/QCR10 and a cleavage product of UQCRFS1). This cytochrome bc1 complex then forms a dimer.</text>
</comment>
<comment type="subcellular location">
    <subcellularLocation>
        <location evidence="2">Mitochondrion inner membrane</location>
        <topology evidence="2">Multi-pass membrane protein</topology>
    </subcellularLocation>
</comment>
<comment type="polymorphism">
    <text>Sequenced in lineages GB01 to GB26.</text>
</comment>
<comment type="miscellaneous">
    <text evidence="1">Heme 1 (or BL or b562) is low-potential and absorbs at about 562 nm, and heme 2 (or BH or b566) is high-potential and absorbs at about 566 nm.</text>
</comment>
<comment type="similarity">
    <text evidence="3 4">Belongs to the cytochrome b family.</text>
</comment>
<comment type="caution">
    <text evidence="2">The full-length protein contains only eight transmembrane helices, not nine as predicted by bioinformatics tools.</text>
</comment>
<proteinExistence type="inferred from homology"/>
<dbReference type="EMBL" id="U18870">
    <property type="protein sequence ID" value="AAB38167.1"/>
    <property type="molecule type" value="Genomic_DNA"/>
</dbReference>
<dbReference type="EMBL" id="U18871">
    <property type="protein sequence ID" value="AAB38168.1"/>
    <property type="molecule type" value="Genomic_DNA"/>
</dbReference>
<dbReference type="EMBL" id="U18872">
    <property type="protein sequence ID" value="AAB38169.1"/>
    <property type="molecule type" value="Genomic_DNA"/>
</dbReference>
<dbReference type="EMBL" id="U18873">
    <property type="protein sequence ID" value="AAB38170.1"/>
    <property type="molecule type" value="Genomic_DNA"/>
</dbReference>
<dbReference type="EMBL" id="U18874">
    <property type="protein sequence ID" value="AAB38171.1"/>
    <property type="molecule type" value="Genomic_DNA"/>
</dbReference>
<dbReference type="EMBL" id="U18875">
    <property type="protein sequence ID" value="AAB38172.1"/>
    <property type="molecule type" value="Genomic_DNA"/>
</dbReference>
<dbReference type="EMBL" id="U18876">
    <property type="protein sequence ID" value="AAB38173.1"/>
    <property type="molecule type" value="Genomic_DNA"/>
</dbReference>
<dbReference type="EMBL" id="U18877">
    <property type="protein sequence ID" value="AAB38174.1"/>
    <property type="molecule type" value="Genomic_DNA"/>
</dbReference>
<dbReference type="EMBL" id="U18878">
    <property type="protein sequence ID" value="AAB38175.1"/>
    <property type="molecule type" value="Genomic_DNA"/>
</dbReference>
<dbReference type="EMBL" id="U18879">
    <property type="protein sequence ID" value="AAB38176.1"/>
    <property type="molecule type" value="Genomic_DNA"/>
</dbReference>
<dbReference type="EMBL" id="U18880">
    <property type="protein sequence ID" value="AAB38177.1"/>
    <property type="molecule type" value="Genomic_DNA"/>
</dbReference>
<dbReference type="EMBL" id="U18881">
    <property type="protein sequence ID" value="AAB38178.1"/>
    <property type="molecule type" value="Genomic_DNA"/>
</dbReference>
<dbReference type="EMBL" id="U18882">
    <property type="protein sequence ID" value="AAB38179.1"/>
    <property type="molecule type" value="Genomic_DNA"/>
</dbReference>
<dbReference type="EMBL" id="U18883">
    <property type="protein sequence ID" value="AAB38180.1"/>
    <property type="molecule type" value="Genomic_DNA"/>
</dbReference>
<dbReference type="EMBL" id="U18884">
    <property type="protein sequence ID" value="AAB38181.1"/>
    <property type="molecule type" value="Genomic_DNA"/>
</dbReference>
<dbReference type="EMBL" id="U18885">
    <property type="protein sequence ID" value="AAB38182.1"/>
    <property type="molecule type" value="Genomic_DNA"/>
</dbReference>
<dbReference type="EMBL" id="U18886">
    <property type="protein sequence ID" value="AAB38183.1"/>
    <property type="molecule type" value="Genomic_DNA"/>
</dbReference>
<dbReference type="EMBL" id="U18887">
    <property type="protein sequence ID" value="AAB38184.1"/>
    <property type="molecule type" value="Genomic_DNA"/>
</dbReference>
<dbReference type="EMBL" id="U18888">
    <property type="protein sequence ID" value="AAB38185.1"/>
    <property type="molecule type" value="Genomic_DNA"/>
</dbReference>
<dbReference type="EMBL" id="U18889">
    <property type="protein sequence ID" value="AAB38186.1"/>
    <property type="molecule type" value="Genomic_DNA"/>
</dbReference>
<dbReference type="EMBL" id="U18890">
    <property type="protein sequence ID" value="AAB38187.1"/>
    <property type="molecule type" value="Genomic_DNA"/>
</dbReference>
<dbReference type="EMBL" id="U18891">
    <property type="protein sequence ID" value="AAB38188.1"/>
    <property type="molecule type" value="Genomic_DNA"/>
</dbReference>
<dbReference type="EMBL" id="U18892">
    <property type="protein sequence ID" value="AAB38189.1"/>
    <property type="molecule type" value="Genomic_DNA"/>
</dbReference>
<dbReference type="EMBL" id="U18893">
    <property type="protein sequence ID" value="AAB38190.1"/>
    <property type="molecule type" value="Genomic_DNA"/>
</dbReference>
<dbReference type="EMBL" id="U18894">
    <property type="protein sequence ID" value="AAB38191.1"/>
    <property type="molecule type" value="Genomic_DNA"/>
</dbReference>
<dbReference type="EMBL" id="U18895">
    <property type="protein sequence ID" value="AAB38192.1"/>
    <property type="molecule type" value="Genomic_DNA"/>
</dbReference>
<dbReference type="EMBL" id="U18896">
    <property type="protein sequence ID" value="AAB38193.1"/>
    <property type="molecule type" value="Genomic_DNA"/>
</dbReference>
<dbReference type="EMBL" id="U18897">
    <property type="protein sequence ID" value="AAB38194.1"/>
    <property type="molecule type" value="Genomic_DNA"/>
</dbReference>
<dbReference type="EMBL" id="X82308">
    <property type="protein sequence ID" value="CAA57751.1"/>
    <property type="molecule type" value="Genomic_DNA"/>
</dbReference>
<dbReference type="EMBL" id="U12855">
    <property type="protein sequence ID" value="AAA67259.1"/>
    <property type="molecule type" value="Genomic_DNA"/>
</dbReference>
<dbReference type="PIR" id="S58454">
    <property type="entry name" value="S58454"/>
</dbReference>
<dbReference type="SMR" id="Q36192"/>
<dbReference type="GO" id="GO:0005743">
    <property type="term" value="C:mitochondrial inner membrane"/>
    <property type="evidence" value="ECO:0007669"/>
    <property type="project" value="UniProtKB-SubCell"/>
</dbReference>
<dbReference type="GO" id="GO:0045275">
    <property type="term" value="C:respiratory chain complex III"/>
    <property type="evidence" value="ECO:0007669"/>
    <property type="project" value="InterPro"/>
</dbReference>
<dbReference type="GO" id="GO:0046872">
    <property type="term" value="F:metal ion binding"/>
    <property type="evidence" value="ECO:0007669"/>
    <property type="project" value="UniProtKB-KW"/>
</dbReference>
<dbReference type="GO" id="GO:0008121">
    <property type="term" value="F:ubiquinol-cytochrome-c reductase activity"/>
    <property type="evidence" value="ECO:0007669"/>
    <property type="project" value="InterPro"/>
</dbReference>
<dbReference type="GO" id="GO:0006122">
    <property type="term" value="P:mitochondrial electron transport, ubiquinol to cytochrome c"/>
    <property type="evidence" value="ECO:0007669"/>
    <property type="project" value="TreeGrafter"/>
</dbReference>
<dbReference type="CDD" id="cd00290">
    <property type="entry name" value="cytochrome_b_C"/>
    <property type="match status" value="1"/>
</dbReference>
<dbReference type="CDD" id="cd00284">
    <property type="entry name" value="Cytochrome_b_N"/>
    <property type="match status" value="1"/>
</dbReference>
<dbReference type="FunFam" id="1.20.810.10:FF:000002">
    <property type="entry name" value="Cytochrome b"/>
    <property type="match status" value="1"/>
</dbReference>
<dbReference type="Gene3D" id="1.20.810.10">
    <property type="entry name" value="Cytochrome Bc1 Complex, Chain C"/>
    <property type="match status" value="1"/>
</dbReference>
<dbReference type="InterPro" id="IPR005798">
    <property type="entry name" value="Cyt_b/b6_C"/>
</dbReference>
<dbReference type="InterPro" id="IPR036150">
    <property type="entry name" value="Cyt_b/b6_C_sf"/>
</dbReference>
<dbReference type="InterPro" id="IPR005797">
    <property type="entry name" value="Cyt_b/b6_N"/>
</dbReference>
<dbReference type="InterPro" id="IPR027387">
    <property type="entry name" value="Cytb/b6-like_sf"/>
</dbReference>
<dbReference type="InterPro" id="IPR030689">
    <property type="entry name" value="Cytochrome_b"/>
</dbReference>
<dbReference type="InterPro" id="IPR048260">
    <property type="entry name" value="Cytochrome_b_C_euk/bac"/>
</dbReference>
<dbReference type="InterPro" id="IPR048259">
    <property type="entry name" value="Cytochrome_b_N_euk/bac"/>
</dbReference>
<dbReference type="InterPro" id="IPR016174">
    <property type="entry name" value="Di-haem_cyt_TM"/>
</dbReference>
<dbReference type="PANTHER" id="PTHR19271">
    <property type="entry name" value="CYTOCHROME B"/>
    <property type="match status" value="1"/>
</dbReference>
<dbReference type="PANTHER" id="PTHR19271:SF16">
    <property type="entry name" value="CYTOCHROME B"/>
    <property type="match status" value="1"/>
</dbReference>
<dbReference type="Pfam" id="PF00032">
    <property type="entry name" value="Cytochrom_B_C"/>
    <property type="match status" value="1"/>
</dbReference>
<dbReference type="Pfam" id="PF00033">
    <property type="entry name" value="Cytochrome_B"/>
    <property type="match status" value="1"/>
</dbReference>
<dbReference type="PIRSF" id="PIRSF038885">
    <property type="entry name" value="COB"/>
    <property type="match status" value="1"/>
</dbReference>
<dbReference type="SUPFAM" id="SSF81648">
    <property type="entry name" value="a domain/subunit of cytochrome bc1 complex (Ubiquinol-cytochrome c reductase)"/>
    <property type="match status" value="1"/>
</dbReference>
<dbReference type="SUPFAM" id="SSF81342">
    <property type="entry name" value="Transmembrane di-heme cytochromes"/>
    <property type="match status" value="1"/>
</dbReference>
<dbReference type="PROSITE" id="PS51003">
    <property type="entry name" value="CYTB_CTER"/>
    <property type="match status" value="1"/>
</dbReference>
<dbReference type="PROSITE" id="PS51002">
    <property type="entry name" value="CYTB_NTER"/>
    <property type="match status" value="1"/>
</dbReference>
<reference key="1">
    <citation type="journal article" date="1996" name="Mol. Phylogenet. Evol.">
        <title>A phylogeny of the bears (Ursidae) inferred from complete sequences of three mitochondrial genes.</title>
        <authorList>
            <person name="Talbot S.L."/>
            <person name="Shields G.F."/>
        </authorList>
    </citation>
    <scope>NUCLEOTIDE SEQUENCE [GENOMIC DNA]</scope>
    <source>
        <tissue>Skeletal muscle</tissue>
    </source>
</reference>
<reference key="2">
    <citation type="journal article" date="1995" name="J. Mol. Evol.">
        <title>A molecular view of pinniped relationships with particular emphasis on the true seals.</title>
        <authorList>
            <person name="Arnason U."/>
            <person name="Bodin K."/>
            <person name="Gullberg A."/>
            <person name="Ledje C."/>
            <person name="Mouchaty S."/>
        </authorList>
    </citation>
    <scope>NUCLEOTIDE SEQUENCE [GENOMIC DNA]</scope>
</reference>
<reference key="3">
    <citation type="submission" date="1995-01" db="EMBL/GenBank/DDBJ databases">
        <authorList>
            <person name="Lento G.M."/>
            <person name="Hickson R.E."/>
            <person name="Chambers G.K."/>
            <person name="Penny D."/>
        </authorList>
    </citation>
    <scope>NUCLEOTIDE SEQUENCE [GENOMIC DNA] OF 1-125</scope>
</reference>
<keyword id="KW-0249">Electron transport</keyword>
<keyword id="KW-0349">Heme</keyword>
<keyword id="KW-0408">Iron</keyword>
<keyword id="KW-0472">Membrane</keyword>
<keyword id="KW-0479">Metal-binding</keyword>
<keyword id="KW-0496">Mitochondrion</keyword>
<keyword id="KW-0999">Mitochondrion inner membrane</keyword>
<keyword id="KW-0679">Respiratory chain</keyword>
<keyword id="KW-0812">Transmembrane</keyword>
<keyword id="KW-1133">Transmembrane helix</keyword>
<keyword id="KW-0813">Transport</keyword>
<keyword id="KW-0830">Ubiquinone</keyword>
<feature type="chain" id="PRO_0000061703" description="Cytochrome b">
    <location>
        <begin position="1"/>
        <end position="379"/>
    </location>
</feature>
<feature type="transmembrane region" description="Helical" evidence="2">
    <location>
        <begin position="33"/>
        <end position="53"/>
    </location>
</feature>
<feature type="transmembrane region" description="Helical" evidence="2">
    <location>
        <begin position="77"/>
        <end position="98"/>
    </location>
</feature>
<feature type="transmembrane region" description="Helical" evidence="2">
    <location>
        <begin position="113"/>
        <end position="133"/>
    </location>
</feature>
<feature type="transmembrane region" description="Helical" evidence="2">
    <location>
        <begin position="178"/>
        <end position="198"/>
    </location>
</feature>
<feature type="transmembrane region" description="Helical" evidence="2">
    <location>
        <begin position="226"/>
        <end position="246"/>
    </location>
</feature>
<feature type="transmembrane region" description="Helical" evidence="2">
    <location>
        <begin position="288"/>
        <end position="308"/>
    </location>
</feature>
<feature type="transmembrane region" description="Helical" evidence="2">
    <location>
        <begin position="320"/>
        <end position="340"/>
    </location>
</feature>
<feature type="transmembrane region" description="Helical" evidence="2">
    <location>
        <begin position="347"/>
        <end position="367"/>
    </location>
</feature>
<feature type="binding site" description="axial binding residue" evidence="2">
    <location>
        <position position="83"/>
    </location>
    <ligand>
        <name>heme b</name>
        <dbReference type="ChEBI" id="CHEBI:60344"/>
        <label>b562</label>
    </ligand>
    <ligandPart>
        <name>Fe</name>
        <dbReference type="ChEBI" id="CHEBI:18248"/>
    </ligandPart>
</feature>
<feature type="binding site" description="axial binding residue" evidence="2">
    <location>
        <position position="97"/>
    </location>
    <ligand>
        <name>heme b</name>
        <dbReference type="ChEBI" id="CHEBI:60344"/>
        <label>b566</label>
    </ligand>
    <ligandPart>
        <name>Fe</name>
        <dbReference type="ChEBI" id="CHEBI:18248"/>
    </ligandPart>
</feature>
<feature type="binding site" description="axial binding residue" evidence="2">
    <location>
        <position position="182"/>
    </location>
    <ligand>
        <name>heme b</name>
        <dbReference type="ChEBI" id="CHEBI:60344"/>
        <label>b562</label>
    </ligand>
    <ligandPart>
        <name>Fe</name>
        <dbReference type="ChEBI" id="CHEBI:18248"/>
    </ligandPart>
</feature>
<feature type="binding site" description="axial binding residue" evidence="2">
    <location>
        <position position="196"/>
    </location>
    <ligand>
        <name>heme b</name>
        <dbReference type="ChEBI" id="CHEBI:60344"/>
        <label>b566</label>
    </ligand>
    <ligandPart>
        <name>Fe</name>
        <dbReference type="ChEBI" id="CHEBI:18248"/>
    </ligandPart>
</feature>
<feature type="binding site" evidence="2">
    <location>
        <position position="201"/>
    </location>
    <ligand>
        <name>a ubiquinone</name>
        <dbReference type="ChEBI" id="CHEBI:16389"/>
    </ligand>
</feature>
<feature type="sequence variant" description="In lineages GB01, GB02, GB03, GB04 and GB05.">
    <original>P</original>
    <variation>S</variation>
    <location>
        <position position="57"/>
    </location>
</feature>
<feature type="sequence variant" description="In lineages GB01, GB02, GB03, GB04 and GB05.">
    <original>I</original>
    <variation>M</variation>
    <location>
        <position position="89"/>
    </location>
</feature>
<feature type="sequence variant" description="In lineages GB01, GB02, GB03, GB04, GB05, GB08, GB09, GB10, GB12, GB14 and GB17.">
    <original>P</original>
    <variation>S</variation>
    <location>
        <position position="110"/>
    </location>
</feature>
<feature type="sequence variant" description="In lineages GB01, GB02, GB03, GB04 and GB05.">
    <original>I</original>
    <variation>V</variation>
    <location>
        <position position="123"/>
    </location>
</feature>
<feature type="sequence variant" description="In lineages GB01, GB02, GB03 and GB05.">
    <original>I</original>
    <variation>V</variation>
    <location>
        <position position="153"/>
    </location>
</feature>
<feature type="sequence variant" description="In lineages GB01, GB02, GB03, GB04 and GB05.">
    <original>A</original>
    <variation>T</variation>
    <location>
        <position position="236"/>
    </location>
</feature>
<feature type="sequence variant" description="In lineages GB01, GB02, GB03, GB04 and GB05.">
    <original>T</original>
    <variation>A</variation>
    <location>
        <position position="238"/>
    </location>
</feature>
<feature type="sequence variant" description="In lineages GB01, GB02, GB03, GB04 and GB05.">
    <original>T</original>
    <variation>I</variation>
    <location>
        <position position="257"/>
    </location>
</feature>
<feature type="sequence variant" description="In lineages GB01, GB02, GB03, GB04 and GB05.">
    <original>I</original>
    <variation>L</variation>
    <location>
        <position position="303"/>
    </location>
</feature>
<feature type="sequence variant" description="In lineage GB01.">
    <original>I</original>
    <variation>T</variation>
    <location>
        <position position="368"/>
    </location>
</feature>
<feature type="sequence variant" description="In lineages GB10 and GB12.">
    <original>N</original>
    <variation>S</variation>
    <location>
        <position position="375"/>
    </location>
</feature>
<gene>
    <name type="primary">MT-CYB</name>
    <name type="synonym">COB</name>
    <name type="synonym">CYTB</name>
    <name type="synonym">MTCYB</name>
</gene>
<name>CYB_URSAR</name>
<organism>
    <name type="scientific">Ursus arctos</name>
    <name type="common">Brown bear</name>
    <name type="synonym">Grizzly bear</name>
    <dbReference type="NCBI Taxonomy" id="9644"/>
    <lineage>
        <taxon>Eukaryota</taxon>
        <taxon>Metazoa</taxon>
        <taxon>Chordata</taxon>
        <taxon>Craniata</taxon>
        <taxon>Vertebrata</taxon>
        <taxon>Euteleostomi</taxon>
        <taxon>Mammalia</taxon>
        <taxon>Eutheria</taxon>
        <taxon>Laurasiatheria</taxon>
        <taxon>Carnivora</taxon>
        <taxon>Caniformia</taxon>
        <taxon>Ursidae</taxon>
        <taxon>Ursus</taxon>
    </lineage>
</organism>
<geneLocation type="mitochondrion"/>
<accession>Q36192</accession>
<accession>Q36191</accession>
<accession>Q36193</accession>
<accession>Q36872</accession>
<accession>Q36938</accession>
<accession>Q36990</accession>
<accession>Q37052</accession>
<protein>
    <recommendedName>
        <fullName>Cytochrome b</fullName>
    </recommendedName>
    <alternativeName>
        <fullName>Complex III subunit 3</fullName>
    </alternativeName>
    <alternativeName>
        <fullName>Complex III subunit III</fullName>
    </alternativeName>
    <alternativeName>
        <fullName>Cytochrome b-c1 complex subunit 3</fullName>
    </alternativeName>
    <alternativeName>
        <fullName>Ubiquinol-cytochrome-c reductase complex cytochrome b subunit</fullName>
    </alternativeName>
</protein>